<gene>
    <name type="primary">treH2</name>
    <name evidence="4" type="ordered locus">Saci_1250</name>
</gene>
<accession>Q4J9D4</accession>
<dbReference type="EC" id="3.2.1.28" evidence="1"/>
<dbReference type="EMBL" id="CP000077">
    <property type="protein sequence ID" value="AAY80596.1"/>
    <property type="molecule type" value="Genomic_DNA"/>
</dbReference>
<dbReference type="RefSeq" id="WP_011278098.1">
    <property type="nucleotide sequence ID" value="NC_007181.1"/>
</dbReference>
<dbReference type="SMR" id="Q4J9D4"/>
<dbReference type="STRING" id="330779.Saci_1250"/>
<dbReference type="CAZy" id="GH15">
    <property type="family name" value="Glycoside Hydrolase Family 15"/>
</dbReference>
<dbReference type="GeneID" id="14551754"/>
<dbReference type="GeneID" id="78441595"/>
<dbReference type="KEGG" id="sai:Saci_1250"/>
<dbReference type="PATRIC" id="fig|330779.12.peg.1212"/>
<dbReference type="eggNOG" id="arCOG03286">
    <property type="taxonomic scope" value="Archaea"/>
</dbReference>
<dbReference type="HOGENOM" id="CLU_010399_3_1_2"/>
<dbReference type="UniPathway" id="UPA00300">
    <property type="reaction ID" value="UER00535"/>
</dbReference>
<dbReference type="Proteomes" id="UP000001018">
    <property type="component" value="Chromosome"/>
</dbReference>
<dbReference type="GO" id="GO:0004555">
    <property type="term" value="F:alpha,alpha-trehalase activity"/>
    <property type="evidence" value="ECO:0007669"/>
    <property type="project" value="UniProtKB-EC"/>
</dbReference>
<dbReference type="GO" id="GO:0005993">
    <property type="term" value="P:trehalose catabolic process"/>
    <property type="evidence" value="ECO:0007669"/>
    <property type="project" value="UniProtKB-UniPathway"/>
</dbReference>
<dbReference type="Gene3D" id="1.50.10.10">
    <property type="match status" value="1"/>
</dbReference>
<dbReference type="InterPro" id="IPR008928">
    <property type="entry name" value="6-hairpin_glycosidase_sf"/>
</dbReference>
<dbReference type="InterPro" id="IPR012341">
    <property type="entry name" value="6hp_glycosidase-like_sf"/>
</dbReference>
<dbReference type="InterPro" id="IPR011613">
    <property type="entry name" value="GH15-like"/>
</dbReference>
<dbReference type="InterPro" id="IPR053494">
    <property type="entry name" value="GH15_Enzymes"/>
</dbReference>
<dbReference type="InterPro" id="IPR045582">
    <property type="entry name" value="Trehalase-like_N"/>
</dbReference>
<dbReference type="InterPro" id="IPR054963">
    <property type="entry name" value="Trehalase_2"/>
</dbReference>
<dbReference type="NCBIfam" id="NF041084">
    <property type="entry name" value="trehalase_H1_Arch"/>
    <property type="match status" value="1"/>
</dbReference>
<dbReference type="NCBIfam" id="NF041085">
    <property type="entry name" value="trehalase_H2_Arch"/>
    <property type="match status" value="1"/>
</dbReference>
<dbReference type="PANTHER" id="PTHR31616:SF0">
    <property type="entry name" value="GLUCAN 1,4-ALPHA-GLUCOSIDASE"/>
    <property type="match status" value="1"/>
</dbReference>
<dbReference type="PANTHER" id="PTHR31616">
    <property type="entry name" value="TREHALASE"/>
    <property type="match status" value="1"/>
</dbReference>
<dbReference type="Pfam" id="PF00723">
    <property type="entry name" value="Glyco_hydro_15"/>
    <property type="match status" value="1"/>
</dbReference>
<dbReference type="Pfam" id="PF19291">
    <property type="entry name" value="TREH_N"/>
    <property type="match status" value="1"/>
</dbReference>
<dbReference type="SUPFAM" id="SSF48208">
    <property type="entry name" value="Six-hairpin glycosidases"/>
    <property type="match status" value="1"/>
</dbReference>
<protein>
    <recommendedName>
        <fullName evidence="2">Trehalase 2</fullName>
        <ecNumber evidence="1">3.2.1.28</ecNumber>
    </recommendedName>
    <alternativeName>
        <fullName evidence="3">Alpha,alpha-trehalase</fullName>
    </alternativeName>
    <alternativeName>
        <fullName evidence="2">SaTreH2</fullName>
    </alternativeName>
</protein>
<reference key="1">
    <citation type="journal article" date="2005" name="J. Bacteriol.">
        <title>The genome of Sulfolobus acidocaldarius, a model organism of the Crenarchaeota.</title>
        <authorList>
            <person name="Chen L."/>
            <person name="Bruegger K."/>
            <person name="Skovgaard M."/>
            <person name="Redder P."/>
            <person name="She Q."/>
            <person name="Torarinsson E."/>
            <person name="Greve B."/>
            <person name="Awayez M."/>
            <person name="Zibat A."/>
            <person name="Klenk H.-P."/>
            <person name="Garrett R.A."/>
        </authorList>
    </citation>
    <scope>NUCLEOTIDE SEQUENCE [LARGE SCALE GENOMIC DNA]</scope>
    <source>
        <strain>ATCC 33909 / DSM 639 / JCM 8929 / NBRC 15157 / NCIMB 11770</strain>
    </source>
</reference>
<reference key="2">
    <citation type="journal article" date="2018" name="Appl. Microbiol. Biotechnol.">
        <title>Two trehalose-hydrolyzing enzymes from Crenarchaeon Sulfolobus acidocaldarius exhibit distinct activities and affinities toward trehalose.</title>
        <authorList>
            <person name="Yuasa M."/>
            <person name="Okamura T."/>
            <person name="Kimura M."/>
            <person name="Honda S."/>
            <person name="Shin Y."/>
            <person name="Kawakita M."/>
            <person name="Oyama F."/>
            <person name="Sakaguchi M."/>
        </authorList>
    </citation>
    <scope>PROTEIN SEQUENCE OF 1-8</scope>
    <scope>FUNCTION</scope>
    <scope>CATALYTIC ACTIVITY</scope>
    <scope>BIOPHYSICOCHEMICAL PROPERTIES</scope>
    <source>
        <strain>ATCC 33909 / DSM 639 / JCM 8929 / NBRC 15157 / NCIMB 11770</strain>
    </source>
</reference>
<comment type="function">
    <text evidence="1">Catalyzes the hydrolysis of alpha,alpha-trehalose into two molecules of D-glucose.</text>
</comment>
<comment type="catalytic activity">
    <reaction evidence="1">
        <text>alpha,alpha-trehalose + H2O = alpha-D-glucose + beta-D-glucose</text>
        <dbReference type="Rhea" id="RHEA:32675"/>
        <dbReference type="ChEBI" id="CHEBI:15377"/>
        <dbReference type="ChEBI" id="CHEBI:15903"/>
        <dbReference type="ChEBI" id="CHEBI:16551"/>
        <dbReference type="ChEBI" id="CHEBI:17925"/>
        <dbReference type="EC" id="3.2.1.28"/>
    </reaction>
</comment>
<comment type="biophysicochemical properties">
    <kinetics>
        <KM evidence="1">2.39 mM for trehalose (at 50 degrees Celsius and pH 3.7)</KM>
        <KM evidence="1">3.47 mM for trehalose (at 70 degrees Celsius and pH 3.7)</KM>
        <text evidence="1">kcat is 1.60 sec(-1) at 50 degrees Celsius and pH 3.7. kcat is 3.43 sec(-1) at 70 degrees Celsius and pH 3.7.</text>
    </kinetics>
    <phDependence>
        <text evidence="1">Optimum pH is 3.7. More than half of the maximal activity is observed over a range between pH 3.5 and 4.5.</text>
    </phDependence>
    <temperatureDependence>
        <text evidence="1">Optimum temperature is 70 degrees Celsius.</text>
    </temperatureDependence>
</comment>
<comment type="pathway">
    <text evidence="3">Glycan degradation; trehalose degradation; D-glucose from alpha,alpha-trehalose: step 1/1.</text>
</comment>
<comment type="similarity">
    <text evidence="3">Belongs to the glycosyl hydrolase 15 family.</text>
</comment>
<organism>
    <name type="scientific">Sulfolobus acidocaldarius (strain ATCC 33909 / DSM 639 / JCM 8929 / NBRC 15157 / NCIMB 11770)</name>
    <dbReference type="NCBI Taxonomy" id="330779"/>
    <lineage>
        <taxon>Archaea</taxon>
        <taxon>Thermoproteota</taxon>
        <taxon>Thermoprotei</taxon>
        <taxon>Sulfolobales</taxon>
        <taxon>Sulfolobaceae</taxon>
        <taxon>Sulfolobus</taxon>
    </lineage>
</organism>
<keyword id="KW-0119">Carbohydrate metabolism</keyword>
<keyword id="KW-0903">Direct protein sequencing</keyword>
<keyword id="KW-0326">Glycosidase</keyword>
<keyword id="KW-0378">Hydrolase</keyword>
<keyword id="KW-1185">Reference proteome</keyword>
<evidence type="ECO:0000269" key="1">
    <source>
    </source>
</evidence>
<evidence type="ECO:0000303" key="2">
    <source>
    </source>
</evidence>
<evidence type="ECO:0000305" key="3"/>
<evidence type="ECO:0000312" key="4">
    <source>
        <dbReference type="EMBL" id="AAY80596.1"/>
    </source>
</evidence>
<name>TREH2_SULAC</name>
<feature type="chain" id="PRO_0000448958" description="Trehalase 2">
    <location>
        <begin position="1"/>
        <end position="576"/>
    </location>
</feature>
<proteinExistence type="evidence at protein level"/>
<sequence>MNYALLSNGITTALEKEGSIEWFPVPKFDSPSVFTKILDEDKGGYFLITPEKFNKVKQQYVEYSLILRTEFDDGNLILIDFLPLSLPAIIRLYEAKVPFNVEVKPLFNYGLVNAGTETRKDGIIYKNPESKEGLELLINGDYKIISPYRITVNSGKGYLYLLYSRDLRYGLFSQKGFVYSEPYEAYSKLLYYSRKELERARKPSIYENAFYRSLSVILGLIYKPSGGIIASPTTSIPEIVGDERNWDYRYVWVRDSSYAIEALVKANLLTHARRALDFLTNLLDPSSKSFDHPFYSVDGTPPPAEENLDWLSGFMNSKPVRIGNAAYLQIQMDIEGAYMNALYEYYKRTLDKDYISSIFWAVEAISDWVSSSWRGESTDIWEERGISRHYTHTKLMSWVALDRASKLAKDLGYNKLFEEWKSRANEIKIDILNNGVKDNHHFVRYYGGDEIDAALLTLPIYDFIPATDTLFMNTLKKIDEELRVADGLYLRYKKDFMGLAKNPFTLVTTWMARVYIRLKEFDRARWLLETLIKCNQDLGLIGEHVDPETCEARGNYPHLFPHSGMVLSILEFDEVR</sequence>